<protein>
    <recommendedName>
        <fullName>Guanine nucleotide-binding protein G(s) subunit alpha</fullName>
    </recommendedName>
    <alternativeName>
        <fullName>Adenylate cyclase-stimulating G alpha protein</fullName>
    </alternativeName>
</protein>
<reference key="1">
    <citation type="journal article" date="2006" name="J. Comp. Neurol.">
        <title>Galpha encoding gene family of the malaria vector mosquito Anopheles gambiae: expression analysis and immunolocalization of AGalphaq and AGalphao in female antennae.</title>
        <authorList>
            <person name="Ruetzler M."/>
            <person name="Lu T."/>
            <person name="Zwiebel L.J."/>
        </authorList>
    </citation>
    <scope>NUCLEOTIDE SEQUENCE [MRNA]</scope>
    <scope>FUNCTION</scope>
    <source>
        <strain>G3</strain>
    </source>
</reference>
<reference evidence="7 8" key="2">
    <citation type="journal article" date="2002" name="Science">
        <title>The genome sequence of the malaria mosquito Anopheles gambiae.</title>
        <authorList>
            <person name="Holt R.A."/>
            <person name="Subramanian G.M."/>
            <person name="Halpern A."/>
            <person name="Sutton G.G."/>
            <person name="Charlab R."/>
            <person name="Nusskern D.R."/>
            <person name="Wincker P."/>
            <person name="Clark A.G."/>
            <person name="Ribeiro J.M.C."/>
            <person name="Wides R."/>
            <person name="Salzberg S.L."/>
            <person name="Loftus B.J."/>
            <person name="Yandell M.D."/>
            <person name="Majoros W.H."/>
            <person name="Rusch D.B."/>
            <person name="Lai Z."/>
            <person name="Kraft C.L."/>
            <person name="Abril J.F."/>
            <person name="Anthouard V."/>
            <person name="Arensburger P."/>
            <person name="Atkinson P.W."/>
            <person name="Baden H."/>
            <person name="de Berardinis V."/>
            <person name="Baldwin D."/>
            <person name="Benes V."/>
            <person name="Biedler J."/>
            <person name="Blass C."/>
            <person name="Bolanos R."/>
            <person name="Boscus D."/>
            <person name="Barnstead M."/>
            <person name="Cai S."/>
            <person name="Center A."/>
            <person name="Chaturverdi K."/>
            <person name="Christophides G.K."/>
            <person name="Chrystal M.A.M."/>
            <person name="Clamp M."/>
            <person name="Cravchik A."/>
            <person name="Curwen V."/>
            <person name="Dana A."/>
            <person name="Delcher A."/>
            <person name="Dew I."/>
            <person name="Evans C.A."/>
            <person name="Flanigan M."/>
            <person name="Grundschober-Freimoser A."/>
            <person name="Friedli L."/>
            <person name="Gu Z."/>
            <person name="Guan P."/>
            <person name="Guigo R."/>
            <person name="Hillenmeyer M.E."/>
            <person name="Hladun S.L."/>
            <person name="Hogan J.R."/>
            <person name="Hong Y.S."/>
            <person name="Hoover J."/>
            <person name="Jaillon O."/>
            <person name="Ke Z."/>
            <person name="Kodira C.D."/>
            <person name="Kokoza E."/>
            <person name="Koutsos A."/>
            <person name="Letunic I."/>
            <person name="Levitsky A.A."/>
            <person name="Liang Y."/>
            <person name="Lin J.-J."/>
            <person name="Lobo N.F."/>
            <person name="Lopez J.R."/>
            <person name="Malek J.A."/>
            <person name="McIntosh T.C."/>
            <person name="Meister S."/>
            <person name="Miller J.R."/>
            <person name="Mobarry C."/>
            <person name="Mongin E."/>
            <person name="Murphy S.D."/>
            <person name="O'Brochta D.A."/>
            <person name="Pfannkoch C."/>
            <person name="Qi R."/>
            <person name="Regier M.A."/>
            <person name="Remington K."/>
            <person name="Shao H."/>
            <person name="Sharakhova M.V."/>
            <person name="Sitter C.D."/>
            <person name="Shetty J."/>
            <person name="Smith T.J."/>
            <person name="Strong R."/>
            <person name="Sun J."/>
            <person name="Thomasova D."/>
            <person name="Ton L.Q."/>
            <person name="Topalis P."/>
            <person name="Tu Z.J."/>
            <person name="Unger M.F."/>
            <person name="Walenz B."/>
            <person name="Wang A.H."/>
            <person name="Wang J."/>
            <person name="Wang M."/>
            <person name="Wang X."/>
            <person name="Woodford K.J."/>
            <person name="Wortman J.R."/>
            <person name="Wu M."/>
            <person name="Yao A."/>
            <person name="Zdobnov E.M."/>
            <person name="Zhang H."/>
            <person name="Zhao Q."/>
            <person name="Zhao S."/>
            <person name="Zhu S.C."/>
            <person name="Zhimulev I."/>
            <person name="Coluzzi M."/>
            <person name="della Torre A."/>
            <person name="Roth C.W."/>
            <person name="Louis C."/>
            <person name="Kalush F."/>
            <person name="Mural R.J."/>
            <person name="Myers E.W."/>
            <person name="Adams M.D."/>
            <person name="Smith H.O."/>
            <person name="Broder S."/>
            <person name="Gardner M.J."/>
            <person name="Fraser C.M."/>
            <person name="Birney E."/>
            <person name="Bork P."/>
            <person name="Brey P.T."/>
            <person name="Venter J.C."/>
            <person name="Weissenbach J."/>
            <person name="Kafatos F.C."/>
            <person name="Collins F.H."/>
            <person name="Hoffman S.L."/>
        </authorList>
    </citation>
    <scope>NUCLEOTIDE SEQUENCE [LARGE SCALE GENOMIC DNA]</scope>
    <source>
        <strain evidence="8">PEST</strain>
    </source>
</reference>
<comment type="function">
    <text evidence="6">Guanine nucleotide-binding proteins (G proteins) are involved as modulators or transducers in various transmembrane signaling systems. The G(s) protein is involved in hormonal regulation of adenylate cyclase: it activates the cyclase. Participates in olfactory signal transduction.</text>
</comment>
<comment type="subunit">
    <text evidence="7">G proteins are composed of 3 units; alpha, beta and gamma. The alpha chain contains the guanine nucleotide binding site.</text>
</comment>
<comment type="similarity">
    <text evidence="7">Belongs to the G-alpha family. G(s) subfamily.</text>
</comment>
<sequence length="383" mass="44701">MGCFGSAGSKQSDSNSSEDTKSQKRRSDAITRQLQKDKQVYRATHRLLLLGAGESGKSTIVKQMRILHVNGFSDSERKQKIEDIKKNIRDAILTITGAMSTLTPPIQLEKPENQARVDYIQDYASGPDFNYPPEFYEHTEELWKDRGVQQTYERSNEYQLIDCAKYFLDRVSEIKQPNYTPTEQDILRCRVLTSGIFETRFQVDKVNFHMFDVGGQRDERRKWIQCFNDVTAIIFVTACSSYNMVLREDPTQNRLRESLDLFKSIWNNRWLRTISVILFLNKQDLLAEKIKAGKSKLSDYFGEFNRYQTPADAVCEMGEDPEVIRAKYFIRDEFLRISTASGDGKHYCYPHFTCAVDTENIKRVFNDCRDIIQRMHLRQYELL</sequence>
<accession>Q7PD79</accession>
<accession>A0EJE9</accession>
<name>GNAS_ANOGA</name>
<proteinExistence type="evidence at transcript level"/>
<keyword id="KW-0342">GTP-binding</keyword>
<keyword id="KW-0449">Lipoprotein</keyword>
<keyword id="KW-0460">Magnesium</keyword>
<keyword id="KW-0479">Metal-binding</keyword>
<keyword id="KW-0547">Nucleotide-binding</keyword>
<keyword id="KW-0552">Olfaction</keyword>
<keyword id="KW-0564">Palmitate</keyword>
<keyword id="KW-1185">Reference proteome</keyword>
<keyword id="KW-0716">Sensory transduction</keyword>
<keyword id="KW-0807">Transducer</keyword>
<dbReference type="EMBL" id="DQ182017">
    <property type="protein sequence ID" value="ABA56309.1"/>
    <property type="molecule type" value="mRNA"/>
</dbReference>
<dbReference type="EMBL" id="AAAB01008986">
    <property type="protein sequence ID" value="EAA00295.1"/>
    <property type="molecule type" value="Genomic_DNA"/>
</dbReference>
<dbReference type="RefSeq" id="XP_320433.1">
    <property type="nucleotide sequence ID" value="XM_320433.1"/>
</dbReference>
<dbReference type="SMR" id="Q7PD79"/>
<dbReference type="FunCoup" id="Q7PD79">
    <property type="interactions" value="505"/>
</dbReference>
<dbReference type="STRING" id="7165.Q7PD79"/>
<dbReference type="PaxDb" id="7165-AGAP012095-PA"/>
<dbReference type="EnsemblMetazoa" id="AGAP029122-RA">
    <property type="protein sequence ID" value="AGAP029122-PA"/>
    <property type="gene ID" value="AGAP029122"/>
</dbReference>
<dbReference type="VEuPathDB" id="VectorBase:AGAMI1_001353"/>
<dbReference type="VEuPathDB" id="VectorBase:AGAP029122"/>
<dbReference type="eggNOG" id="KOG0099">
    <property type="taxonomic scope" value="Eukaryota"/>
</dbReference>
<dbReference type="HOGENOM" id="CLU_014184_3_0_1"/>
<dbReference type="InParanoid" id="Q7PD79"/>
<dbReference type="OMA" id="DHVAKCW"/>
<dbReference type="PhylomeDB" id="Q7PD79"/>
<dbReference type="Proteomes" id="UP000007062">
    <property type="component" value="Chromosome 3L"/>
</dbReference>
<dbReference type="GO" id="GO:0005737">
    <property type="term" value="C:cytoplasm"/>
    <property type="evidence" value="ECO:0000318"/>
    <property type="project" value="GO_Central"/>
</dbReference>
<dbReference type="GO" id="GO:0005834">
    <property type="term" value="C:heterotrimeric G-protein complex"/>
    <property type="evidence" value="ECO:0000318"/>
    <property type="project" value="GO_Central"/>
</dbReference>
<dbReference type="GO" id="GO:0001664">
    <property type="term" value="F:G protein-coupled receptor binding"/>
    <property type="evidence" value="ECO:0000318"/>
    <property type="project" value="GO_Central"/>
</dbReference>
<dbReference type="GO" id="GO:0031683">
    <property type="term" value="F:G-protein beta/gamma-subunit complex binding"/>
    <property type="evidence" value="ECO:0000318"/>
    <property type="project" value="GO_Central"/>
</dbReference>
<dbReference type="GO" id="GO:0005525">
    <property type="term" value="F:GTP binding"/>
    <property type="evidence" value="ECO:0007669"/>
    <property type="project" value="UniProtKB-KW"/>
</dbReference>
<dbReference type="GO" id="GO:0003924">
    <property type="term" value="F:GTPase activity"/>
    <property type="evidence" value="ECO:0000318"/>
    <property type="project" value="GO_Central"/>
</dbReference>
<dbReference type="GO" id="GO:0046872">
    <property type="term" value="F:metal ion binding"/>
    <property type="evidence" value="ECO:0007669"/>
    <property type="project" value="UniProtKB-KW"/>
</dbReference>
<dbReference type="GO" id="GO:0007191">
    <property type="term" value="P:adenylate cyclase-activating dopamine receptor signaling pathway"/>
    <property type="evidence" value="ECO:0000318"/>
    <property type="project" value="GO_Central"/>
</dbReference>
<dbReference type="GO" id="GO:0007606">
    <property type="term" value="P:sensory perception of chemical stimulus"/>
    <property type="evidence" value="ECO:0000318"/>
    <property type="project" value="GO_Central"/>
</dbReference>
<dbReference type="GO" id="GO:0007608">
    <property type="term" value="P:sensory perception of smell"/>
    <property type="evidence" value="ECO:0007669"/>
    <property type="project" value="UniProtKB-KW"/>
</dbReference>
<dbReference type="CDD" id="cd00066">
    <property type="entry name" value="G-alpha"/>
    <property type="match status" value="1"/>
</dbReference>
<dbReference type="FunFam" id="3.40.50.300:FF:000720">
    <property type="entry name" value="Guanine nucleotide-binding protein G(k) subunit alpha"/>
    <property type="match status" value="1"/>
</dbReference>
<dbReference type="FunFam" id="1.10.400.10:FF:000003">
    <property type="entry name" value="Guanine nucleotide-binding protein G(S) subunit alpha"/>
    <property type="match status" value="1"/>
</dbReference>
<dbReference type="FunFam" id="3.40.50.300:FF:006178">
    <property type="entry name" value="Guanine nucleotide-binding protein G(s) subunit alpha isoforms short"/>
    <property type="match status" value="1"/>
</dbReference>
<dbReference type="Gene3D" id="1.10.400.10">
    <property type="entry name" value="GI Alpha 1, domain 2-like"/>
    <property type="match status" value="1"/>
</dbReference>
<dbReference type="Gene3D" id="3.40.50.300">
    <property type="entry name" value="P-loop containing nucleotide triphosphate hydrolases"/>
    <property type="match status" value="1"/>
</dbReference>
<dbReference type="InterPro" id="IPR000367">
    <property type="entry name" value="Gprotein_alpha_S"/>
</dbReference>
<dbReference type="InterPro" id="IPR001019">
    <property type="entry name" value="Gprotein_alpha_su"/>
</dbReference>
<dbReference type="InterPro" id="IPR011025">
    <property type="entry name" value="GproteinA_insert"/>
</dbReference>
<dbReference type="InterPro" id="IPR027417">
    <property type="entry name" value="P-loop_NTPase"/>
</dbReference>
<dbReference type="PANTHER" id="PTHR10218:SF212">
    <property type="entry name" value="G PROTEIN ALPHA S SUBUNIT"/>
    <property type="match status" value="1"/>
</dbReference>
<dbReference type="PANTHER" id="PTHR10218">
    <property type="entry name" value="GTP-BINDING PROTEIN ALPHA SUBUNIT"/>
    <property type="match status" value="1"/>
</dbReference>
<dbReference type="Pfam" id="PF00503">
    <property type="entry name" value="G-alpha"/>
    <property type="match status" value="1"/>
</dbReference>
<dbReference type="PRINTS" id="PR00318">
    <property type="entry name" value="GPROTEINA"/>
</dbReference>
<dbReference type="PRINTS" id="PR00443">
    <property type="entry name" value="GPROTEINAS"/>
</dbReference>
<dbReference type="SMART" id="SM00275">
    <property type="entry name" value="G_alpha"/>
    <property type="match status" value="1"/>
</dbReference>
<dbReference type="SUPFAM" id="SSF52540">
    <property type="entry name" value="P-loop containing nucleoside triphosphate hydrolases"/>
    <property type="match status" value="1"/>
</dbReference>
<dbReference type="SUPFAM" id="SSF47895">
    <property type="entry name" value="Transducin (alpha subunit), insertion domain"/>
    <property type="match status" value="1"/>
</dbReference>
<dbReference type="PROSITE" id="PS51882">
    <property type="entry name" value="G_ALPHA"/>
    <property type="match status" value="1"/>
</dbReference>
<gene>
    <name evidence="3" type="primary">G-s-alpha-60A</name>
    <name type="ORF">AGAP012095</name>
</gene>
<organism>
    <name type="scientific">Anopheles gambiae</name>
    <name type="common">African malaria mosquito</name>
    <dbReference type="NCBI Taxonomy" id="7165"/>
    <lineage>
        <taxon>Eukaryota</taxon>
        <taxon>Metazoa</taxon>
        <taxon>Ecdysozoa</taxon>
        <taxon>Arthropoda</taxon>
        <taxon>Hexapoda</taxon>
        <taxon>Insecta</taxon>
        <taxon>Pterygota</taxon>
        <taxon>Neoptera</taxon>
        <taxon>Endopterygota</taxon>
        <taxon>Diptera</taxon>
        <taxon>Nematocera</taxon>
        <taxon>Culicoidea</taxon>
        <taxon>Culicidae</taxon>
        <taxon>Anophelinae</taxon>
        <taxon>Anopheles</taxon>
    </lineage>
</organism>
<feature type="initiator methionine" description="Removed" evidence="1">
    <location>
        <position position="1"/>
    </location>
</feature>
<feature type="chain" id="PRO_0000233312" description="Guanine nucleotide-binding protein G(s) subunit alpha">
    <location>
        <begin position="2"/>
        <end position="383"/>
    </location>
</feature>
<feature type="domain" description="G-alpha" evidence="4">
    <location>
        <begin position="43"/>
        <end position="383"/>
    </location>
</feature>
<feature type="region of interest" description="Disordered" evidence="5">
    <location>
        <begin position="1"/>
        <end position="31"/>
    </location>
</feature>
<feature type="region of interest" description="G1 motif" evidence="4">
    <location>
        <begin position="46"/>
        <end position="59"/>
    </location>
</feature>
<feature type="region of interest" description="G2 motif" evidence="4">
    <location>
        <begin position="185"/>
        <end position="193"/>
    </location>
</feature>
<feature type="region of interest" description="G3 motif" evidence="4">
    <location>
        <begin position="208"/>
        <end position="217"/>
    </location>
</feature>
<feature type="region of interest" description="G4 motif" evidence="4">
    <location>
        <begin position="277"/>
        <end position="284"/>
    </location>
</feature>
<feature type="region of interest" description="G5 motif" evidence="4">
    <location>
        <begin position="353"/>
        <end position="358"/>
    </location>
</feature>
<feature type="compositionally biased region" description="Polar residues" evidence="5">
    <location>
        <begin position="8"/>
        <end position="17"/>
    </location>
</feature>
<feature type="compositionally biased region" description="Basic and acidic residues" evidence="5">
    <location>
        <begin position="18"/>
        <end position="31"/>
    </location>
</feature>
<feature type="binding site" evidence="2">
    <location>
        <begin position="51"/>
        <end position="58"/>
    </location>
    <ligand>
        <name>GTP</name>
        <dbReference type="ChEBI" id="CHEBI:37565"/>
    </ligand>
</feature>
<feature type="binding site" evidence="1">
    <location>
        <position position="58"/>
    </location>
    <ligand>
        <name>Mg(2+)</name>
        <dbReference type="ChEBI" id="CHEBI:18420"/>
    </ligand>
</feature>
<feature type="binding site" evidence="1">
    <location>
        <begin position="187"/>
        <end position="193"/>
    </location>
    <ligand>
        <name>GTP</name>
        <dbReference type="ChEBI" id="CHEBI:37565"/>
    </ligand>
</feature>
<feature type="binding site" evidence="1">
    <location>
        <position position="193"/>
    </location>
    <ligand>
        <name>Mg(2+)</name>
        <dbReference type="ChEBI" id="CHEBI:18420"/>
    </ligand>
</feature>
<feature type="binding site" evidence="2">
    <location>
        <begin position="212"/>
        <end position="216"/>
    </location>
    <ligand>
        <name>GTP</name>
        <dbReference type="ChEBI" id="CHEBI:37565"/>
    </ligand>
</feature>
<feature type="binding site" evidence="2">
    <location>
        <begin position="281"/>
        <end position="284"/>
    </location>
    <ligand>
        <name>GTP</name>
        <dbReference type="ChEBI" id="CHEBI:37565"/>
    </ligand>
</feature>
<feature type="binding site" evidence="1">
    <location>
        <position position="355"/>
    </location>
    <ligand>
        <name>GTP</name>
        <dbReference type="ChEBI" id="CHEBI:37565"/>
    </ligand>
</feature>
<feature type="lipid moiety-binding region" description="N-palmitoyl glycine" evidence="1">
    <location>
        <position position="2"/>
    </location>
</feature>
<feature type="lipid moiety-binding region" description="S-palmitoyl cysteine" evidence="2">
    <location>
        <position position="3"/>
    </location>
</feature>
<evidence type="ECO:0000250" key="1"/>
<evidence type="ECO:0000250" key="2">
    <source>
        <dbReference type="UniProtKB" id="P04695"/>
    </source>
</evidence>
<evidence type="ECO:0000250" key="3">
    <source>
        <dbReference type="UniProtKB" id="P20354"/>
    </source>
</evidence>
<evidence type="ECO:0000255" key="4">
    <source>
        <dbReference type="PROSITE-ProRule" id="PRU01230"/>
    </source>
</evidence>
<evidence type="ECO:0000256" key="5">
    <source>
        <dbReference type="SAM" id="MobiDB-lite"/>
    </source>
</evidence>
<evidence type="ECO:0000269" key="6">
    <source>
    </source>
</evidence>
<evidence type="ECO:0000305" key="7"/>
<evidence type="ECO:0000312" key="8">
    <source>
        <dbReference type="EMBL" id="EAA00295.1"/>
    </source>
</evidence>